<organism>
    <name type="scientific">Tolumonas auensis (strain DSM 9187 / NBRC 110442 / TA 4)</name>
    <dbReference type="NCBI Taxonomy" id="595494"/>
    <lineage>
        <taxon>Bacteria</taxon>
        <taxon>Pseudomonadati</taxon>
        <taxon>Pseudomonadota</taxon>
        <taxon>Gammaproteobacteria</taxon>
        <taxon>Aeromonadales</taxon>
        <taxon>Aeromonadaceae</taxon>
        <taxon>Tolumonas</taxon>
    </lineage>
</organism>
<comment type="function">
    <text evidence="1">Essential cell division protein. May link together the upstream cell division proteins, which are predominantly cytoplasmic, with the downstream cell division proteins, which are predominantly periplasmic.</text>
</comment>
<comment type="subunit">
    <text evidence="1">Part of a complex composed of FtsB, FtsL and FtsQ.</text>
</comment>
<comment type="subcellular location">
    <subcellularLocation>
        <location evidence="1">Cell inner membrane</location>
        <topology evidence="1">Single-pass type II membrane protein</topology>
    </subcellularLocation>
    <text evidence="1">Localizes to the division septum.</text>
</comment>
<comment type="similarity">
    <text evidence="1">Belongs to the FtsB family.</text>
</comment>
<keyword id="KW-0131">Cell cycle</keyword>
<keyword id="KW-0132">Cell division</keyword>
<keyword id="KW-0997">Cell inner membrane</keyword>
<keyword id="KW-1003">Cell membrane</keyword>
<keyword id="KW-0175">Coiled coil</keyword>
<keyword id="KW-0472">Membrane</keyword>
<keyword id="KW-1185">Reference proteome</keyword>
<keyword id="KW-0812">Transmembrane</keyword>
<keyword id="KW-1133">Transmembrane helix</keyword>
<sequence length="105" mass="12166">MRLFTLILMVVLALVQRQLWFGKNGLVEYRQVSENLLRRQADNQKLQERNMLLKEDIEDLKSGLEAIEELARNDLGFIKSGETFYRVLPRDSAGQNKQSSLPKSD</sequence>
<dbReference type="EMBL" id="CP001616">
    <property type="protein sequence ID" value="ACQ94334.1"/>
    <property type="molecule type" value="Genomic_DNA"/>
</dbReference>
<dbReference type="RefSeq" id="WP_015879783.1">
    <property type="nucleotide sequence ID" value="NC_012691.1"/>
</dbReference>
<dbReference type="SMR" id="C4LBR0"/>
<dbReference type="STRING" id="595494.Tola_2741"/>
<dbReference type="KEGG" id="tau:Tola_2741"/>
<dbReference type="eggNOG" id="COG2919">
    <property type="taxonomic scope" value="Bacteria"/>
</dbReference>
<dbReference type="HOGENOM" id="CLU_134863_5_2_6"/>
<dbReference type="OrthoDB" id="7061211at2"/>
<dbReference type="Proteomes" id="UP000009073">
    <property type="component" value="Chromosome"/>
</dbReference>
<dbReference type="GO" id="GO:0032153">
    <property type="term" value="C:cell division site"/>
    <property type="evidence" value="ECO:0007669"/>
    <property type="project" value="UniProtKB-UniRule"/>
</dbReference>
<dbReference type="GO" id="GO:0030428">
    <property type="term" value="C:cell septum"/>
    <property type="evidence" value="ECO:0007669"/>
    <property type="project" value="TreeGrafter"/>
</dbReference>
<dbReference type="GO" id="GO:0005886">
    <property type="term" value="C:plasma membrane"/>
    <property type="evidence" value="ECO:0007669"/>
    <property type="project" value="UniProtKB-SubCell"/>
</dbReference>
<dbReference type="GO" id="GO:0043093">
    <property type="term" value="P:FtsZ-dependent cytokinesis"/>
    <property type="evidence" value="ECO:0007669"/>
    <property type="project" value="UniProtKB-UniRule"/>
</dbReference>
<dbReference type="HAMAP" id="MF_00599">
    <property type="entry name" value="FtsB"/>
    <property type="match status" value="1"/>
</dbReference>
<dbReference type="InterPro" id="IPR023081">
    <property type="entry name" value="Cell_div_FtsB"/>
</dbReference>
<dbReference type="InterPro" id="IPR007060">
    <property type="entry name" value="FtsL/DivIC"/>
</dbReference>
<dbReference type="NCBIfam" id="NF002058">
    <property type="entry name" value="PRK00888.1"/>
    <property type="match status" value="1"/>
</dbReference>
<dbReference type="PANTHER" id="PTHR37485">
    <property type="entry name" value="CELL DIVISION PROTEIN FTSB"/>
    <property type="match status" value="1"/>
</dbReference>
<dbReference type="PANTHER" id="PTHR37485:SF1">
    <property type="entry name" value="CELL DIVISION PROTEIN FTSB"/>
    <property type="match status" value="1"/>
</dbReference>
<dbReference type="Pfam" id="PF04977">
    <property type="entry name" value="DivIC"/>
    <property type="match status" value="1"/>
</dbReference>
<protein>
    <recommendedName>
        <fullName evidence="1">Cell division protein FtsB</fullName>
    </recommendedName>
</protein>
<evidence type="ECO:0000255" key="1">
    <source>
        <dbReference type="HAMAP-Rule" id="MF_00599"/>
    </source>
</evidence>
<feature type="chain" id="PRO_1000212190" description="Cell division protein FtsB">
    <location>
        <begin position="1"/>
        <end position="105"/>
    </location>
</feature>
<feature type="topological domain" description="Cytoplasmic" evidence="1">
    <location>
        <begin position="1"/>
        <end position="3"/>
    </location>
</feature>
<feature type="transmembrane region" description="Helical" evidence="1">
    <location>
        <begin position="4"/>
        <end position="21"/>
    </location>
</feature>
<feature type="topological domain" description="Periplasmic" evidence="1">
    <location>
        <begin position="22"/>
        <end position="105"/>
    </location>
</feature>
<feature type="coiled-coil region" evidence="1">
    <location>
        <begin position="28"/>
        <end position="74"/>
    </location>
</feature>
<gene>
    <name evidence="1" type="primary">ftsB</name>
    <name type="ordered locus">Tola_2741</name>
</gene>
<accession>C4LBR0</accession>
<reference key="1">
    <citation type="submission" date="2009-05" db="EMBL/GenBank/DDBJ databases">
        <title>Complete sequence of Tolumonas auensis DSM 9187.</title>
        <authorList>
            <consortium name="US DOE Joint Genome Institute"/>
            <person name="Lucas S."/>
            <person name="Copeland A."/>
            <person name="Lapidus A."/>
            <person name="Glavina del Rio T."/>
            <person name="Tice H."/>
            <person name="Bruce D."/>
            <person name="Goodwin L."/>
            <person name="Pitluck S."/>
            <person name="Chertkov O."/>
            <person name="Brettin T."/>
            <person name="Detter J.C."/>
            <person name="Han C."/>
            <person name="Larimer F."/>
            <person name="Land M."/>
            <person name="Hauser L."/>
            <person name="Kyrpides N."/>
            <person name="Mikhailova N."/>
            <person name="Spring S."/>
            <person name="Beller H."/>
        </authorList>
    </citation>
    <scope>NUCLEOTIDE SEQUENCE [LARGE SCALE GENOMIC DNA]</scope>
    <source>
        <strain>DSM 9187 / NBRC 110442 / TA 4</strain>
    </source>
</reference>
<proteinExistence type="inferred from homology"/>
<name>FTSB_TOLAT</name>